<name>UBIA_AERS4</name>
<organism>
    <name type="scientific">Aeromonas salmonicida (strain A449)</name>
    <dbReference type="NCBI Taxonomy" id="382245"/>
    <lineage>
        <taxon>Bacteria</taxon>
        <taxon>Pseudomonadati</taxon>
        <taxon>Pseudomonadota</taxon>
        <taxon>Gammaproteobacteria</taxon>
        <taxon>Aeromonadales</taxon>
        <taxon>Aeromonadaceae</taxon>
        <taxon>Aeromonas</taxon>
    </lineage>
</organism>
<gene>
    <name evidence="1" type="primary">ubiA</name>
    <name type="ordered locus">ASA_4208</name>
</gene>
<protein>
    <recommendedName>
        <fullName evidence="1">4-hydroxybenzoate octaprenyltransferase</fullName>
        <ecNumber evidence="1">2.5.1.39</ecNumber>
    </recommendedName>
    <alternativeName>
        <fullName evidence="1">4-HB polyprenyltransferase</fullName>
    </alternativeName>
</protein>
<proteinExistence type="inferred from homology"/>
<reference key="1">
    <citation type="journal article" date="2008" name="BMC Genomics">
        <title>The genome of Aeromonas salmonicida subsp. salmonicida A449: insights into the evolution of a fish pathogen.</title>
        <authorList>
            <person name="Reith M.E."/>
            <person name="Singh R.K."/>
            <person name="Curtis B."/>
            <person name="Boyd J.M."/>
            <person name="Bouevitch A."/>
            <person name="Kimball J."/>
            <person name="Munholland J."/>
            <person name="Murphy C."/>
            <person name="Sarty D."/>
            <person name="Williams J."/>
            <person name="Nash J.H."/>
            <person name="Johnson S.C."/>
            <person name="Brown L.L."/>
        </authorList>
    </citation>
    <scope>NUCLEOTIDE SEQUENCE [LARGE SCALE GENOMIC DNA]</scope>
    <source>
        <strain>A449</strain>
    </source>
</reference>
<feature type="chain" id="PRO_0000336972" description="4-hydroxybenzoate octaprenyltransferase">
    <location>
        <begin position="1"/>
        <end position="289"/>
    </location>
</feature>
<feature type="transmembrane region" description="Helical" evidence="1">
    <location>
        <begin position="21"/>
        <end position="40"/>
    </location>
</feature>
<feature type="transmembrane region" description="Helical" evidence="1">
    <location>
        <begin position="95"/>
        <end position="115"/>
    </location>
</feature>
<feature type="transmembrane region" description="Helical" evidence="1">
    <location>
        <begin position="116"/>
        <end position="136"/>
    </location>
</feature>
<feature type="transmembrane region" description="Helical" evidence="1">
    <location>
        <begin position="138"/>
        <end position="158"/>
    </location>
</feature>
<feature type="transmembrane region" description="Helical" evidence="1">
    <location>
        <begin position="161"/>
        <end position="181"/>
    </location>
</feature>
<feature type="transmembrane region" description="Helical" evidence="1">
    <location>
        <begin position="213"/>
        <end position="233"/>
    </location>
</feature>
<feature type="transmembrane region" description="Helical" evidence="1">
    <location>
        <begin position="236"/>
        <end position="256"/>
    </location>
</feature>
<feature type="transmembrane region" description="Helical" evidence="1">
    <location>
        <begin position="268"/>
        <end position="288"/>
    </location>
</feature>
<accession>A4STB5</accession>
<evidence type="ECO:0000255" key="1">
    <source>
        <dbReference type="HAMAP-Rule" id="MF_01635"/>
    </source>
</evidence>
<evidence type="ECO:0000305" key="2"/>
<comment type="function">
    <text evidence="1">Catalyzes the prenylation of para-hydroxybenzoate (PHB) with an all-trans polyprenyl group. Mediates the second step in the final reaction sequence of ubiquinone-8 (UQ-8) biosynthesis, which is the condensation of the polyisoprenoid side chain with PHB, generating the first membrane-bound Q intermediate 3-octaprenyl-4-hydroxybenzoate.</text>
</comment>
<comment type="catalytic activity">
    <reaction evidence="1">
        <text>all-trans-octaprenyl diphosphate + 4-hydroxybenzoate = 4-hydroxy-3-(all-trans-octaprenyl)benzoate + diphosphate</text>
        <dbReference type="Rhea" id="RHEA:27782"/>
        <dbReference type="ChEBI" id="CHEBI:1617"/>
        <dbReference type="ChEBI" id="CHEBI:17879"/>
        <dbReference type="ChEBI" id="CHEBI:33019"/>
        <dbReference type="ChEBI" id="CHEBI:57711"/>
        <dbReference type="EC" id="2.5.1.39"/>
    </reaction>
</comment>
<comment type="cofactor">
    <cofactor evidence="1">
        <name>Mg(2+)</name>
        <dbReference type="ChEBI" id="CHEBI:18420"/>
    </cofactor>
</comment>
<comment type="pathway">
    <text evidence="1">Cofactor biosynthesis; ubiquinone biosynthesis.</text>
</comment>
<comment type="subcellular location">
    <subcellularLocation>
        <location evidence="1">Cell inner membrane</location>
        <topology evidence="1">Multi-pass membrane protein</topology>
    </subcellularLocation>
</comment>
<comment type="similarity">
    <text evidence="1">Belongs to the UbiA prenyltransferase family.</text>
</comment>
<comment type="sequence caution" evidence="2">
    <conflict type="erroneous initiation">
        <sequence resource="EMBL-CDS" id="ABO92137"/>
    </conflict>
</comment>
<dbReference type="EC" id="2.5.1.39" evidence="1"/>
<dbReference type="EMBL" id="CP000644">
    <property type="protein sequence ID" value="ABO92137.1"/>
    <property type="status" value="ALT_INIT"/>
    <property type="molecule type" value="Genomic_DNA"/>
</dbReference>
<dbReference type="RefSeq" id="WP_005321240.1">
    <property type="nucleotide sequence ID" value="NC_009348.1"/>
</dbReference>
<dbReference type="SMR" id="A4STB5"/>
<dbReference type="STRING" id="29491.GCA_000820065_04466"/>
<dbReference type="KEGG" id="asa:ASA_4208"/>
<dbReference type="eggNOG" id="COG0382">
    <property type="taxonomic scope" value="Bacteria"/>
</dbReference>
<dbReference type="HOGENOM" id="CLU_034879_1_0_6"/>
<dbReference type="UniPathway" id="UPA00232"/>
<dbReference type="Proteomes" id="UP000000225">
    <property type="component" value="Chromosome"/>
</dbReference>
<dbReference type="GO" id="GO:0005886">
    <property type="term" value="C:plasma membrane"/>
    <property type="evidence" value="ECO:0007669"/>
    <property type="project" value="UniProtKB-SubCell"/>
</dbReference>
<dbReference type="GO" id="GO:0008412">
    <property type="term" value="F:4-hydroxybenzoate polyprenyltransferase activity"/>
    <property type="evidence" value="ECO:0007669"/>
    <property type="project" value="UniProtKB-UniRule"/>
</dbReference>
<dbReference type="GO" id="GO:0006744">
    <property type="term" value="P:ubiquinone biosynthetic process"/>
    <property type="evidence" value="ECO:0007669"/>
    <property type="project" value="UniProtKB-UniRule"/>
</dbReference>
<dbReference type="CDD" id="cd13959">
    <property type="entry name" value="PT_UbiA_COQ2"/>
    <property type="match status" value="1"/>
</dbReference>
<dbReference type="FunFam" id="1.10.357.140:FF:000002">
    <property type="entry name" value="4-hydroxybenzoate octaprenyltransferase"/>
    <property type="match status" value="1"/>
</dbReference>
<dbReference type="FunFam" id="1.20.120.1780:FF:000001">
    <property type="entry name" value="4-hydroxybenzoate octaprenyltransferase"/>
    <property type="match status" value="1"/>
</dbReference>
<dbReference type="Gene3D" id="1.10.357.140">
    <property type="entry name" value="UbiA prenyltransferase"/>
    <property type="match status" value="1"/>
</dbReference>
<dbReference type="Gene3D" id="1.20.120.1780">
    <property type="entry name" value="UbiA prenyltransferase"/>
    <property type="match status" value="1"/>
</dbReference>
<dbReference type="HAMAP" id="MF_01635">
    <property type="entry name" value="UbiA"/>
    <property type="match status" value="1"/>
</dbReference>
<dbReference type="InterPro" id="IPR006370">
    <property type="entry name" value="HB_polyprenyltransferase-like"/>
</dbReference>
<dbReference type="InterPro" id="IPR039653">
    <property type="entry name" value="Prenyltransferase"/>
</dbReference>
<dbReference type="InterPro" id="IPR000537">
    <property type="entry name" value="UbiA_prenyltransferase"/>
</dbReference>
<dbReference type="InterPro" id="IPR030470">
    <property type="entry name" value="UbiA_prenylTrfase_CS"/>
</dbReference>
<dbReference type="InterPro" id="IPR044878">
    <property type="entry name" value="UbiA_sf"/>
</dbReference>
<dbReference type="NCBIfam" id="TIGR01474">
    <property type="entry name" value="ubiA_proteo"/>
    <property type="match status" value="1"/>
</dbReference>
<dbReference type="PANTHER" id="PTHR11048:SF28">
    <property type="entry name" value="4-HYDROXYBENZOATE POLYPRENYLTRANSFERASE, MITOCHONDRIAL"/>
    <property type="match status" value="1"/>
</dbReference>
<dbReference type="PANTHER" id="PTHR11048">
    <property type="entry name" value="PRENYLTRANSFERASES"/>
    <property type="match status" value="1"/>
</dbReference>
<dbReference type="Pfam" id="PF01040">
    <property type="entry name" value="UbiA"/>
    <property type="match status" value="1"/>
</dbReference>
<dbReference type="PROSITE" id="PS00943">
    <property type="entry name" value="UBIA"/>
    <property type="match status" value="1"/>
</dbReference>
<keyword id="KW-0997">Cell inner membrane</keyword>
<keyword id="KW-1003">Cell membrane</keyword>
<keyword id="KW-0460">Magnesium</keyword>
<keyword id="KW-0472">Membrane</keyword>
<keyword id="KW-0808">Transferase</keyword>
<keyword id="KW-0812">Transmembrane</keyword>
<keyword id="KW-1133">Transmembrane helix</keyword>
<keyword id="KW-0831">Ubiquinone biosynthesis</keyword>
<sequence length="289" mass="32165">MNLLTKERGLAYVQLARIDKPIGTLLLLWPTLWALWLAAGGLPDLWTLLVFVVGVFLMRSAGCVINDYADRNFDGHVKRTAGRPLPMGKVKPREVLALFAVLALISFALVLTMNSLTIALSFAALLLAVCYPFMKRYIPIPQLVLGMAFSWSIPMAYAAQANALPLVAWLVFLANLLWTIAYDTQYAMVDRDDDLKLGLKSSAILFGRHDKRIIGVLQLATLLILLAVGQLMGLGAWYYWGLLGAAALFVYQQRLIRERQREACFQAFLNNNYAGALVFIGLVLNYLLP</sequence>